<proteinExistence type="inferred from homology"/>
<protein>
    <recommendedName>
        <fullName evidence="3">Putative type I restriction enzyme MjaX specificity subunit</fullName>
        <shortName>S protein</shortName>
    </recommendedName>
    <alternativeName>
        <fullName evidence="2">Putative type I specificity subunit S.MjaX</fullName>
        <shortName evidence="2">S.MjaX</shortName>
    </alternativeName>
</protein>
<reference key="1">
    <citation type="journal article" date="1996" name="Science">
        <title>Complete genome sequence of the methanogenic archaeon, Methanococcus jannaschii.</title>
        <authorList>
            <person name="Bult C.J."/>
            <person name="White O."/>
            <person name="Olsen G.J."/>
            <person name="Zhou L."/>
            <person name="Fleischmann R.D."/>
            <person name="Sutton G.G."/>
            <person name="Blake J.A."/>
            <person name="FitzGerald L.M."/>
            <person name="Clayton R.A."/>
            <person name="Gocayne J.D."/>
            <person name="Kerlavage A.R."/>
            <person name="Dougherty B.A."/>
            <person name="Tomb J.-F."/>
            <person name="Adams M.D."/>
            <person name="Reich C.I."/>
            <person name="Overbeek R."/>
            <person name="Kirkness E.F."/>
            <person name="Weinstock K.G."/>
            <person name="Merrick J.M."/>
            <person name="Glodek A."/>
            <person name="Scott J.L."/>
            <person name="Geoghagen N.S.M."/>
            <person name="Weidman J.F."/>
            <person name="Fuhrmann J.L."/>
            <person name="Nguyen D."/>
            <person name="Utterback T.R."/>
            <person name="Kelley J.M."/>
            <person name="Peterson J.D."/>
            <person name="Sadow P.W."/>
            <person name="Hanna M.C."/>
            <person name="Cotton M.D."/>
            <person name="Roberts K.M."/>
            <person name="Hurst M.A."/>
            <person name="Kaine B.P."/>
            <person name="Borodovsky M."/>
            <person name="Klenk H.-P."/>
            <person name="Fraser C.M."/>
            <person name="Smith H.O."/>
            <person name="Woese C.R."/>
            <person name="Venter J.C."/>
        </authorList>
    </citation>
    <scope>NUCLEOTIDE SEQUENCE [LARGE SCALE GENOMIC DNA]</scope>
    <source>
        <strain>ATCC 43067 / DSM 2661 / JAL-1 / JCM 10045 / NBRC 100440</strain>
    </source>
</reference>
<reference key="2">
    <citation type="journal article" date="2003" name="Nucleic Acids Res.">
        <title>A nomenclature for restriction enzymes, DNA methyltransferases, homing endonucleases and their genes.</title>
        <authorList>
            <person name="Roberts R.J."/>
            <person name="Belfort M."/>
            <person name="Bestor T."/>
            <person name="Bhagwat A.S."/>
            <person name="Bickle T.A."/>
            <person name="Bitinaite J."/>
            <person name="Blumenthal R.M."/>
            <person name="Degtyarev S.K."/>
            <person name="Dryden D.T."/>
            <person name="Dybvig K."/>
            <person name="Firman K."/>
            <person name="Gromova E.S."/>
            <person name="Gumport R.I."/>
            <person name="Halford S.E."/>
            <person name="Hattman S."/>
            <person name="Heitman J."/>
            <person name="Hornby D.P."/>
            <person name="Janulaitis A."/>
            <person name="Jeltsch A."/>
            <person name="Josephsen J."/>
            <person name="Kiss A."/>
            <person name="Klaenhammer T.R."/>
            <person name="Kobayashi I."/>
            <person name="Kong H."/>
            <person name="Krueger D.H."/>
            <person name="Lacks S."/>
            <person name="Marinus M.G."/>
            <person name="Miyahara M."/>
            <person name="Morgan R.D."/>
            <person name="Murray N.E."/>
            <person name="Nagaraja V."/>
            <person name="Piekarowicz A."/>
            <person name="Pingoud A."/>
            <person name="Raleigh E."/>
            <person name="Rao D.N."/>
            <person name="Reich N."/>
            <person name="Repin V.E."/>
            <person name="Selker E.U."/>
            <person name="Shaw P.C."/>
            <person name="Stein D.C."/>
            <person name="Stoddard B.L."/>
            <person name="Szybalski W."/>
            <person name="Trautner T.A."/>
            <person name="Van Etten J.L."/>
            <person name="Vitor J.M."/>
            <person name="Wilson G.G."/>
            <person name="Xu S.Y."/>
        </authorList>
    </citation>
    <scope>NOMENCLATURE</scope>
</reference>
<dbReference type="EMBL" id="L77117">
    <property type="protein sequence ID" value="AAB99552.1"/>
    <property type="molecule type" value="Genomic_DNA"/>
</dbReference>
<dbReference type="PIR" id="B64491">
    <property type="entry name" value="B64491"/>
</dbReference>
<dbReference type="SMR" id="Q58926"/>
<dbReference type="STRING" id="243232.MJ_1531"/>
<dbReference type="REBASE" id="3899">
    <property type="entry name" value="S.MjaX"/>
</dbReference>
<dbReference type="PaxDb" id="243232-MJ_1531"/>
<dbReference type="EnsemblBacteria" id="AAB99552">
    <property type="protein sequence ID" value="AAB99552"/>
    <property type="gene ID" value="MJ_1531"/>
</dbReference>
<dbReference type="KEGG" id="mja:MJ_1531"/>
<dbReference type="eggNOG" id="arCOG02626">
    <property type="taxonomic scope" value="Archaea"/>
</dbReference>
<dbReference type="HOGENOM" id="CLU_021095_2_1_2"/>
<dbReference type="InParanoid" id="Q58926"/>
<dbReference type="PhylomeDB" id="Q58926"/>
<dbReference type="Proteomes" id="UP000000805">
    <property type="component" value="Chromosome"/>
</dbReference>
<dbReference type="GO" id="GO:0003677">
    <property type="term" value="F:DNA binding"/>
    <property type="evidence" value="ECO:0007669"/>
    <property type="project" value="UniProtKB-KW"/>
</dbReference>
<dbReference type="GO" id="GO:0009307">
    <property type="term" value="P:DNA restriction-modification system"/>
    <property type="evidence" value="ECO:0007669"/>
    <property type="project" value="UniProtKB-KW"/>
</dbReference>
<dbReference type="CDD" id="cd17522">
    <property type="entry name" value="RMtype1_S_MjaORF1531P-TRD1-CR1_like"/>
    <property type="match status" value="1"/>
</dbReference>
<dbReference type="CDD" id="cd17245">
    <property type="entry name" value="RMtype1_S_TteMORF1547P-TRD2-CR2_Aco12261I-TRD1-CR1_like"/>
    <property type="match status" value="1"/>
</dbReference>
<dbReference type="Gene3D" id="1.10.287.1120">
    <property type="entry name" value="Bipartite methylase S protein"/>
    <property type="match status" value="1"/>
</dbReference>
<dbReference type="Gene3D" id="3.90.220.20">
    <property type="entry name" value="DNA methylase specificity domains"/>
    <property type="match status" value="2"/>
</dbReference>
<dbReference type="InterPro" id="IPR000055">
    <property type="entry name" value="Restrct_endonuc_typeI_TRD"/>
</dbReference>
<dbReference type="InterPro" id="IPR044946">
    <property type="entry name" value="Restrct_endonuc_typeI_TRD_sf"/>
</dbReference>
<dbReference type="InterPro" id="IPR052021">
    <property type="entry name" value="Type-I_RS_S_subunit"/>
</dbReference>
<dbReference type="PANTHER" id="PTHR30408:SF12">
    <property type="entry name" value="TYPE I RESTRICTION ENZYME MJAVIII SPECIFICITY SUBUNIT"/>
    <property type="match status" value="1"/>
</dbReference>
<dbReference type="PANTHER" id="PTHR30408">
    <property type="entry name" value="TYPE-1 RESTRICTION ENZYME ECOKI SPECIFICITY PROTEIN"/>
    <property type="match status" value="1"/>
</dbReference>
<dbReference type="Pfam" id="PF01420">
    <property type="entry name" value="Methylase_S"/>
    <property type="match status" value="2"/>
</dbReference>
<dbReference type="SUPFAM" id="SSF116734">
    <property type="entry name" value="DNA methylase specificity domain"/>
    <property type="match status" value="2"/>
</dbReference>
<comment type="function">
    <text evidence="2">A putative specificity (S) subunit of a type I restriction enzyme thought to recognize 5'-TAGN(6)TGC-3'; the other subunits are unknown.</text>
</comment>
<comment type="domain">
    <text evidence="1">Contains two DNA recognition domains, each specifying recognition of one of the two defined components of the target sequence.</text>
</comment>
<comment type="similarity">
    <text evidence="3">Belongs to the type-I restriction system S methylase family.</text>
</comment>
<name>T1SX_METJA</name>
<gene>
    <name type="ordered locus">MJ1531</name>
</gene>
<feature type="chain" id="PRO_0000107393" description="Putative type I restriction enzyme MjaX specificity subunit">
    <location>
        <begin position="1"/>
        <end position="425"/>
    </location>
</feature>
<sequence length="425" mass="48889">MVILLQFYKEENFKKTEIGEIPEDWEVRELKDILEVIRNGLTAKQNKDKIGYPITRIETISDSKIDITKLGYVEDIKQEDIAKYRLIIGDILFSHINSEEHIGKVAIYEGKPEFLLHGMNLLLLRPNKNKIEPYYLLYLLRHFKQKNIFKYIAKRAVNQSSINQTQLKHLKIPLPPLEEQKQIAKILSDFDNLIGTINKQIEVLNKAKKGMMKKLFTKGVFEHKSFKKSEIGEIPEDWEVVELGNEKYFKIIMGQSPPSSSYNKEGEGVPFLQGKAEFGNIYPNPVLYTNKPLKVVDDEDILISVRAPVGDVNIAPFKLCIGRGLAGIKSNKEKVDNFFVFYYLSYIKPKIEYLGGGAVFKAITKKDLESIKIPLPPLEEQKAIAKRLKAIDDLIEIKRKEKEQIEKAKKKIMNLLLTGKIRVKT</sequence>
<keyword id="KW-0238">DNA-binding</keyword>
<keyword id="KW-1185">Reference proteome</keyword>
<keyword id="KW-0680">Restriction system</keyword>
<evidence type="ECO:0000250" key="1">
    <source>
        <dbReference type="UniProtKB" id="P05719"/>
    </source>
</evidence>
<evidence type="ECO:0000303" key="2">
    <source>
    </source>
</evidence>
<evidence type="ECO:0000305" key="3"/>
<accession>Q58926</accession>
<organism>
    <name type="scientific">Methanocaldococcus jannaschii (strain ATCC 43067 / DSM 2661 / JAL-1 / JCM 10045 / NBRC 100440)</name>
    <name type="common">Methanococcus jannaschii</name>
    <dbReference type="NCBI Taxonomy" id="243232"/>
    <lineage>
        <taxon>Archaea</taxon>
        <taxon>Methanobacteriati</taxon>
        <taxon>Methanobacteriota</taxon>
        <taxon>Methanomada group</taxon>
        <taxon>Methanococci</taxon>
        <taxon>Methanococcales</taxon>
        <taxon>Methanocaldococcaceae</taxon>
        <taxon>Methanocaldococcus</taxon>
    </lineage>
</organism>